<evidence type="ECO:0000255" key="1">
    <source>
        <dbReference type="HAMAP-Rule" id="MF_01320"/>
    </source>
</evidence>
<evidence type="ECO:0000256" key="2">
    <source>
        <dbReference type="SAM" id="MobiDB-lite"/>
    </source>
</evidence>
<evidence type="ECO:0000305" key="3"/>
<name>RL2_METM6</name>
<keyword id="KW-0687">Ribonucleoprotein</keyword>
<keyword id="KW-0689">Ribosomal protein</keyword>
<keyword id="KW-0694">RNA-binding</keyword>
<keyword id="KW-0699">rRNA-binding</keyword>
<comment type="function">
    <text evidence="1">One of the primary rRNA binding proteins. Required for association of the 30S and 50S subunits to form the 70S ribosome, for tRNA binding and peptide bond formation. It has been suggested to have peptidyltransferase activity; this is somewhat controversial. Makes several contacts with the 16S rRNA in the 70S ribosome.</text>
</comment>
<comment type="subunit">
    <text evidence="1">Part of the 50S ribosomal subunit. Forms a bridge to the 30S subunit in the 70S ribosome.</text>
</comment>
<comment type="similarity">
    <text evidence="1">Belongs to the universal ribosomal protein uL2 family.</text>
</comment>
<organism>
    <name type="scientific">Methanococcus maripaludis (strain C6 / ATCC BAA-1332)</name>
    <dbReference type="NCBI Taxonomy" id="444158"/>
    <lineage>
        <taxon>Archaea</taxon>
        <taxon>Methanobacteriati</taxon>
        <taxon>Methanobacteriota</taxon>
        <taxon>Methanomada group</taxon>
        <taxon>Methanococci</taxon>
        <taxon>Methanococcales</taxon>
        <taxon>Methanococcaceae</taxon>
        <taxon>Methanococcus</taxon>
    </lineage>
</organism>
<accession>A9A9B5</accession>
<sequence>MGKRLISQNRGRGTPKYRSPSHKRKGAVKYRSYDEMEKDGKILGTVVDILHDPGRSAPVAKVRFANDEERLVLIPEGIQVGEEIECGISAEIKPGNVLPLGEIPEGIPVYNIETIPGDGGKLVRSGGCYAHVVSHDVGKTIVKLPSGFSKVLNPACRATVGVVAGGGRKEKPFVKAGKKHHSLSAKAIAWPKVRGVAMNAVDHPYGGGRHQHLGKPSSVSRHTSPGRKVGHIASRRTGRK</sequence>
<proteinExistence type="inferred from homology"/>
<feature type="chain" id="PRO_1000141578" description="Large ribosomal subunit protein uL2">
    <location>
        <begin position="1"/>
        <end position="240"/>
    </location>
</feature>
<feature type="region of interest" description="Disordered" evidence="2">
    <location>
        <begin position="1"/>
        <end position="31"/>
    </location>
</feature>
<feature type="region of interest" description="Disordered" evidence="2">
    <location>
        <begin position="206"/>
        <end position="240"/>
    </location>
</feature>
<feature type="compositionally biased region" description="Polar residues" evidence="2">
    <location>
        <begin position="1"/>
        <end position="11"/>
    </location>
</feature>
<feature type="compositionally biased region" description="Basic residues" evidence="2">
    <location>
        <begin position="13"/>
        <end position="28"/>
    </location>
</feature>
<feature type="compositionally biased region" description="Basic residues" evidence="2">
    <location>
        <begin position="224"/>
        <end position="240"/>
    </location>
</feature>
<gene>
    <name evidence="1" type="primary">rpl2</name>
    <name type="ordered locus">MmarC6_1124</name>
</gene>
<reference key="1">
    <citation type="submission" date="2007-10" db="EMBL/GenBank/DDBJ databases">
        <title>Complete sequence of Methanococcus maripaludis C6.</title>
        <authorList>
            <consortium name="US DOE Joint Genome Institute"/>
            <person name="Copeland A."/>
            <person name="Lucas S."/>
            <person name="Lapidus A."/>
            <person name="Barry K."/>
            <person name="Glavina del Rio T."/>
            <person name="Dalin E."/>
            <person name="Tice H."/>
            <person name="Pitluck S."/>
            <person name="Clum A."/>
            <person name="Schmutz J."/>
            <person name="Larimer F."/>
            <person name="Land M."/>
            <person name="Hauser L."/>
            <person name="Kyrpides N."/>
            <person name="Mikhailova N."/>
            <person name="Sieprawska-Lupa M."/>
            <person name="Whitman W.B."/>
            <person name="Richardson P."/>
        </authorList>
    </citation>
    <scope>NUCLEOTIDE SEQUENCE [LARGE SCALE GENOMIC DNA]</scope>
    <source>
        <strain>C6 / ATCC BAA-1332</strain>
    </source>
</reference>
<protein>
    <recommendedName>
        <fullName evidence="1">Large ribosomal subunit protein uL2</fullName>
    </recommendedName>
    <alternativeName>
        <fullName evidence="3">50S ribosomal protein L2</fullName>
    </alternativeName>
</protein>
<dbReference type="EMBL" id="CP000867">
    <property type="protein sequence ID" value="ABX01938.1"/>
    <property type="molecule type" value="Genomic_DNA"/>
</dbReference>
<dbReference type="SMR" id="A9A9B5"/>
<dbReference type="STRING" id="444158.MmarC6_1124"/>
<dbReference type="KEGG" id="mmx:MmarC6_1124"/>
<dbReference type="eggNOG" id="arCOG04067">
    <property type="taxonomic scope" value="Archaea"/>
</dbReference>
<dbReference type="HOGENOM" id="CLU_036235_0_3_2"/>
<dbReference type="OrthoDB" id="5987at2157"/>
<dbReference type="PhylomeDB" id="A9A9B5"/>
<dbReference type="GO" id="GO:0022625">
    <property type="term" value="C:cytosolic large ribosomal subunit"/>
    <property type="evidence" value="ECO:0007669"/>
    <property type="project" value="TreeGrafter"/>
</dbReference>
<dbReference type="GO" id="GO:0019843">
    <property type="term" value="F:rRNA binding"/>
    <property type="evidence" value="ECO:0007669"/>
    <property type="project" value="UniProtKB-UniRule"/>
</dbReference>
<dbReference type="GO" id="GO:0003735">
    <property type="term" value="F:structural constituent of ribosome"/>
    <property type="evidence" value="ECO:0007669"/>
    <property type="project" value="InterPro"/>
</dbReference>
<dbReference type="GO" id="GO:0002181">
    <property type="term" value="P:cytoplasmic translation"/>
    <property type="evidence" value="ECO:0007669"/>
    <property type="project" value="TreeGrafter"/>
</dbReference>
<dbReference type="FunFam" id="2.40.50.140:FF:000020">
    <property type="entry name" value="60S ribosomal protein L2"/>
    <property type="match status" value="1"/>
</dbReference>
<dbReference type="FunFam" id="4.10.950.10:FF:000002">
    <property type="entry name" value="60S ribosomal protein L2"/>
    <property type="match status" value="1"/>
</dbReference>
<dbReference type="FunFam" id="2.30.30.30:FF:000006">
    <property type="entry name" value="60S ribosomal protein L8"/>
    <property type="match status" value="1"/>
</dbReference>
<dbReference type="Gene3D" id="2.30.30.30">
    <property type="match status" value="1"/>
</dbReference>
<dbReference type="Gene3D" id="2.40.50.140">
    <property type="entry name" value="Nucleic acid-binding proteins"/>
    <property type="match status" value="1"/>
</dbReference>
<dbReference type="Gene3D" id="4.10.950.10">
    <property type="entry name" value="Ribosomal protein L2, domain 3"/>
    <property type="match status" value="1"/>
</dbReference>
<dbReference type="HAMAP" id="MF_01320_A">
    <property type="entry name" value="Ribosomal_uL2_A"/>
    <property type="match status" value="1"/>
</dbReference>
<dbReference type="InterPro" id="IPR012340">
    <property type="entry name" value="NA-bd_OB-fold"/>
</dbReference>
<dbReference type="InterPro" id="IPR014722">
    <property type="entry name" value="Rib_uL2_dom2"/>
</dbReference>
<dbReference type="InterPro" id="IPR002171">
    <property type="entry name" value="Ribosomal_uL2"/>
</dbReference>
<dbReference type="InterPro" id="IPR023672">
    <property type="entry name" value="Ribosomal_uL2_arc_euk"/>
</dbReference>
<dbReference type="InterPro" id="IPR022669">
    <property type="entry name" value="Ribosomal_uL2_C"/>
</dbReference>
<dbReference type="InterPro" id="IPR022671">
    <property type="entry name" value="Ribosomal_uL2_CS"/>
</dbReference>
<dbReference type="InterPro" id="IPR014726">
    <property type="entry name" value="Ribosomal_uL2_dom3"/>
</dbReference>
<dbReference type="InterPro" id="IPR022666">
    <property type="entry name" value="Ribosomal_uL2_RNA-bd_dom"/>
</dbReference>
<dbReference type="InterPro" id="IPR008991">
    <property type="entry name" value="Translation_prot_SH3-like_sf"/>
</dbReference>
<dbReference type="NCBIfam" id="NF007180">
    <property type="entry name" value="PRK09612.1"/>
    <property type="match status" value="1"/>
</dbReference>
<dbReference type="PANTHER" id="PTHR13691:SF16">
    <property type="entry name" value="LARGE RIBOSOMAL SUBUNIT PROTEIN UL2"/>
    <property type="match status" value="1"/>
</dbReference>
<dbReference type="PANTHER" id="PTHR13691">
    <property type="entry name" value="RIBOSOMAL PROTEIN L2"/>
    <property type="match status" value="1"/>
</dbReference>
<dbReference type="Pfam" id="PF00181">
    <property type="entry name" value="Ribosomal_L2"/>
    <property type="match status" value="1"/>
</dbReference>
<dbReference type="Pfam" id="PF03947">
    <property type="entry name" value="Ribosomal_L2_C"/>
    <property type="match status" value="1"/>
</dbReference>
<dbReference type="PIRSF" id="PIRSF002158">
    <property type="entry name" value="Ribosomal_L2"/>
    <property type="match status" value="1"/>
</dbReference>
<dbReference type="SMART" id="SM01383">
    <property type="entry name" value="Ribosomal_L2"/>
    <property type="match status" value="1"/>
</dbReference>
<dbReference type="SMART" id="SM01382">
    <property type="entry name" value="Ribosomal_L2_C"/>
    <property type="match status" value="1"/>
</dbReference>
<dbReference type="SUPFAM" id="SSF50249">
    <property type="entry name" value="Nucleic acid-binding proteins"/>
    <property type="match status" value="1"/>
</dbReference>
<dbReference type="SUPFAM" id="SSF50104">
    <property type="entry name" value="Translation proteins SH3-like domain"/>
    <property type="match status" value="1"/>
</dbReference>
<dbReference type="PROSITE" id="PS00467">
    <property type="entry name" value="RIBOSOMAL_L2"/>
    <property type="match status" value="1"/>
</dbReference>